<protein>
    <recommendedName>
        <fullName evidence="1">Aminomethyltransferase</fullName>
        <ecNumber evidence="1">2.1.2.10</ecNumber>
    </recommendedName>
    <alternativeName>
        <fullName evidence="1">Glycine cleavage system T protein</fullName>
    </alternativeName>
</protein>
<dbReference type="EC" id="2.1.2.10" evidence="1"/>
<dbReference type="EMBL" id="CP000825">
    <property type="protein sequence ID" value="ABV51573.1"/>
    <property type="molecule type" value="Genomic_DNA"/>
</dbReference>
<dbReference type="RefSeq" id="WP_012008560.1">
    <property type="nucleotide sequence ID" value="NC_009840.1"/>
</dbReference>
<dbReference type="SMR" id="A8G7J2"/>
<dbReference type="STRING" id="93060.P9215_19601"/>
<dbReference type="KEGG" id="pmh:P9215_19601"/>
<dbReference type="eggNOG" id="COG0404">
    <property type="taxonomic scope" value="Bacteria"/>
</dbReference>
<dbReference type="HOGENOM" id="CLU_007884_10_2_3"/>
<dbReference type="OrthoDB" id="9774591at2"/>
<dbReference type="Proteomes" id="UP000002014">
    <property type="component" value="Chromosome"/>
</dbReference>
<dbReference type="GO" id="GO:0005829">
    <property type="term" value="C:cytosol"/>
    <property type="evidence" value="ECO:0007669"/>
    <property type="project" value="TreeGrafter"/>
</dbReference>
<dbReference type="GO" id="GO:0005960">
    <property type="term" value="C:glycine cleavage complex"/>
    <property type="evidence" value="ECO:0007669"/>
    <property type="project" value="InterPro"/>
</dbReference>
<dbReference type="GO" id="GO:0004047">
    <property type="term" value="F:aminomethyltransferase activity"/>
    <property type="evidence" value="ECO:0007669"/>
    <property type="project" value="UniProtKB-UniRule"/>
</dbReference>
<dbReference type="GO" id="GO:0008483">
    <property type="term" value="F:transaminase activity"/>
    <property type="evidence" value="ECO:0007669"/>
    <property type="project" value="UniProtKB-KW"/>
</dbReference>
<dbReference type="GO" id="GO:0019464">
    <property type="term" value="P:glycine decarboxylation via glycine cleavage system"/>
    <property type="evidence" value="ECO:0007669"/>
    <property type="project" value="UniProtKB-UniRule"/>
</dbReference>
<dbReference type="FunFam" id="2.40.30.110:FF:000003">
    <property type="entry name" value="Aminomethyltransferase"/>
    <property type="match status" value="1"/>
</dbReference>
<dbReference type="FunFam" id="4.10.1250.10:FF:000001">
    <property type="entry name" value="Aminomethyltransferase"/>
    <property type="match status" value="1"/>
</dbReference>
<dbReference type="Gene3D" id="2.40.30.110">
    <property type="entry name" value="Aminomethyltransferase beta-barrel domains"/>
    <property type="match status" value="1"/>
</dbReference>
<dbReference type="Gene3D" id="3.30.70.1400">
    <property type="entry name" value="Aminomethyltransferase beta-barrel domains"/>
    <property type="match status" value="1"/>
</dbReference>
<dbReference type="Gene3D" id="4.10.1250.10">
    <property type="entry name" value="Aminomethyltransferase fragment"/>
    <property type="match status" value="1"/>
</dbReference>
<dbReference type="Gene3D" id="3.30.1360.120">
    <property type="entry name" value="Probable tRNA modification gtpase trme, domain 1"/>
    <property type="match status" value="1"/>
</dbReference>
<dbReference type="HAMAP" id="MF_00259">
    <property type="entry name" value="GcvT"/>
    <property type="match status" value="1"/>
</dbReference>
<dbReference type="InterPro" id="IPR006223">
    <property type="entry name" value="GCS_T"/>
</dbReference>
<dbReference type="InterPro" id="IPR022903">
    <property type="entry name" value="GCS_T_bac"/>
</dbReference>
<dbReference type="InterPro" id="IPR013977">
    <property type="entry name" value="GCST_C"/>
</dbReference>
<dbReference type="InterPro" id="IPR006222">
    <property type="entry name" value="GCV_T_N"/>
</dbReference>
<dbReference type="InterPro" id="IPR028896">
    <property type="entry name" value="GcvT/YgfZ/DmdA"/>
</dbReference>
<dbReference type="InterPro" id="IPR029043">
    <property type="entry name" value="GcvT/YgfZ_C"/>
</dbReference>
<dbReference type="InterPro" id="IPR027266">
    <property type="entry name" value="TrmE/GcvT_dom1"/>
</dbReference>
<dbReference type="NCBIfam" id="TIGR00528">
    <property type="entry name" value="gcvT"/>
    <property type="match status" value="1"/>
</dbReference>
<dbReference type="NCBIfam" id="NF001567">
    <property type="entry name" value="PRK00389.1"/>
    <property type="match status" value="1"/>
</dbReference>
<dbReference type="PANTHER" id="PTHR43757">
    <property type="entry name" value="AMINOMETHYLTRANSFERASE"/>
    <property type="match status" value="1"/>
</dbReference>
<dbReference type="PANTHER" id="PTHR43757:SF2">
    <property type="entry name" value="AMINOMETHYLTRANSFERASE, MITOCHONDRIAL"/>
    <property type="match status" value="1"/>
</dbReference>
<dbReference type="Pfam" id="PF01571">
    <property type="entry name" value="GCV_T"/>
    <property type="match status" value="1"/>
</dbReference>
<dbReference type="Pfam" id="PF08669">
    <property type="entry name" value="GCV_T_C"/>
    <property type="match status" value="1"/>
</dbReference>
<dbReference type="PIRSF" id="PIRSF006487">
    <property type="entry name" value="GcvT"/>
    <property type="match status" value="1"/>
</dbReference>
<dbReference type="SUPFAM" id="SSF101790">
    <property type="entry name" value="Aminomethyltransferase beta-barrel domain"/>
    <property type="match status" value="1"/>
</dbReference>
<dbReference type="SUPFAM" id="SSF103025">
    <property type="entry name" value="Folate-binding domain"/>
    <property type="match status" value="1"/>
</dbReference>
<accession>A8G7J2</accession>
<proteinExistence type="inferred from homology"/>
<feature type="chain" id="PRO_1000059088" description="Aminomethyltransferase">
    <location>
        <begin position="1"/>
        <end position="370"/>
    </location>
</feature>
<name>GCST_PROM2</name>
<keyword id="KW-0032">Aminotransferase</keyword>
<keyword id="KW-0808">Transferase</keyword>
<comment type="function">
    <text evidence="1">The glycine cleavage system catalyzes the degradation of glycine.</text>
</comment>
<comment type="catalytic activity">
    <reaction evidence="1">
        <text>N(6)-[(R)-S(8)-aminomethyldihydrolipoyl]-L-lysyl-[protein] + (6S)-5,6,7,8-tetrahydrofolate = N(6)-[(R)-dihydrolipoyl]-L-lysyl-[protein] + (6R)-5,10-methylene-5,6,7,8-tetrahydrofolate + NH4(+)</text>
        <dbReference type="Rhea" id="RHEA:16945"/>
        <dbReference type="Rhea" id="RHEA-COMP:10475"/>
        <dbReference type="Rhea" id="RHEA-COMP:10492"/>
        <dbReference type="ChEBI" id="CHEBI:15636"/>
        <dbReference type="ChEBI" id="CHEBI:28938"/>
        <dbReference type="ChEBI" id="CHEBI:57453"/>
        <dbReference type="ChEBI" id="CHEBI:83100"/>
        <dbReference type="ChEBI" id="CHEBI:83143"/>
        <dbReference type="EC" id="2.1.2.10"/>
    </reaction>
</comment>
<comment type="subunit">
    <text evidence="1">The glycine cleavage system is composed of four proteins: P, T, L and H.</text>
</comment>
<comment type="similarity">
    <text evidence="1">Belongs to the GcvT family.</text>
</comment>
<evidence type="ECO:0000255" key="1">
    <source>
        <dbReference type="HAMAP-Rule" id="MF_00259"/>
    </source>
</evidence>
<organism>
    <name type="scientific">Prochlorococcus marinus (strain MIT 9215)</name>
    <dbReference type="NCBI Taxonomy" id="93060"/>
    <lineage>
        <taxon>Bacteria</taxon>
        <taxon>Bacillati</taxon>
        <taxon>Cyanobacteriota</taxon>
        <taxon>Cyanophyceae</taxon>
        <taxon>Synechococcales</taxon>
        <taxon>Prochlorococcaceae</taxon>
        <taxon>Prochlorococcus</taxon>
    </lineage>
</organism>
<gene>
    <name evidence="1" type="primary">gcvT</name>
    <name type="ordered locus">P9215_19601</name>
</gene>
<sequence length="370" mass="41752">MDLLKSPLYSKYVESNAKLVNFAGWEMPISFSGLIKEHESVRSSAGLFDISHMGVISIKGINPKDYIQKLFPTNLYSFSEGQGLYTVMLNDKGGIIDDLIIYDLGIQENDLSELLLIVNASRYEEDFQWIKNNLNMSEISITNFKKDKVLLALQGKNSFDLFEEWIESSISYIPTFGCEYKIFEHISPKEKIFFSKTGYTGENGLEILLSKKAAINLWDFSISKNVTPCGLGARDTLRLEAGMHLYGQDINEETSPYEAGLGWLVHLENNHEFFGRRFLEEQSRLGIQKKLVGLSIEGKAIGRKGCAVLKGEENIGTITSGSWSPTKQQAIAFAYINTTHALINNEVQISIRGKKFKGVITKRAFYKKNY</sequence>
<reference key="1">
    <citation type="journal article" date="2007" name="PLoS Genet.">
        <title>Patterns and implications of gene gain and loss in the evolution of Prochlorococcus.</title>
        <authorList>
            <person name="Kettler G.C."/>
            <person name="Martiny A.C."/>
            <person name="Huang K."/>
            <person name="Zucker J."/>
            <person name="Coleman M.L."/>
            <person name="Rodrigue S."/>
            <person name="Chen F."/>
            <person name="Lapidus A."/>
            <person name="Ferriera S."/>
            <person name="Johnson J."/>
            <person name="Steglich C."/>
            <person name="Church G.M."/>
            <person name="Richardson P."/>
            <person name="Chisholm S.W."/>
        </authorList>
    </citation>
    <scope>NUCLEOTIDE SEQUENCE [LARGE SCALE GENOMIC DNA]</scope>
    <source>
        <strain>MIT 9215</strain>
    </source>
</reference>